<sequence length="150" mass="16343">MPIVDSGSVAPLSAAEKTKIRSAWAPVYSNYETTGVDILVKFFTSTPAAQEFFPKFKGLTTADQLKKSADVRWHAERIINAVNDAVVSMDDTEKMSMKLGDLSGKHAKSFQVDPQYFKVLAAVIADTVAAGDAGFEKLMSMICILLRSAY</sequence>
<protein>
    <recommendedName>
        <fullName>Globin-3</fullName>
    </recommendedName>
    <alternativeName>
        <fullName>Globin III</fullName>
    </alternativeName>
</protein>
<accession>P09968</accession>
<feature type="initiator methionine" description="Removed" evidence="1">
    <location>
        <position position="1"/>
    </location>
</feature>
<feature type="chain" id="PRO_0000052528" description="Globin-3">
    <location>
        <begin position="2"/>
        <end position="150"/>
    </location>
</feature>
<feature type="domain" description="Globin" evidence="2">
    <location>
        <begin position="11"/>
        <end position="150"/>
    </location>
</feature>
<feature type="binding site" description="distal binding residue" evidence="2">
    <location>
        <position position="74"/>
    </location>
    <ligand>
        <name>heme b</name>
        <dbReference type="ChEBI" id="CHEBI:60344"/>
    </ligand>
    <ligandPart>
        <name>Fe</name>
        <dbReference type="ChEBI" id="CHEBI:18248"/>
    </ligandPart>
</feature>
<feature type="binding site" description="proximal binding residue" evidence="2">
    <location>
        <position position="106"/>
    </location>
    <ligand>
        <name>heme b</name>
        <dbReference type="ChEBI" id="CHEBI:60344"/>
    </ligand>
    <ligandPart>
        <name>Fe</name>
        <dbReference type="ChEBI" id="CHEBI:18248"/>
    </ligandPart>
</feature>
<organism>
    <name type="scientific">Petromyzon marinus</name>
    <name type="common">Sea lamprey</name>
    <dbReference type="NCBI Taxonomy" id="7757"/>
    <lineage>
        <taxon>Eukaryota</taxon>
        <taxon>Metazoa</taxon>
        <taxon>Chordata</taxon>
        <taxon>Craniata</taxon>
        <taxon>Vertebrata</taxon>
        <taxon>Cyclostomata</taxon>
        <taxon>Hyperoartia</taxon>
        <taxon>Petromyzontiformes</taxon>
        <taxon>Petromyzontidae</taxon>
        <taxon>Petromyzon</taxon>
    </lineage>
</organism>
<keyword id="KW-0903">Direct protein sequencing</keyword>
<keyword id="KW-0349">Heme</keyword>
<keyword id="KW-0408">Iron</keyword>
<keyword id="KW-0479">Metal-binding</keyword>
<keyword id="KW-0561">Oxygen transport</keyword>
<keyword id="KW-0813">Transport</keyword>
<evidence type="ECO:0000250" key="1"/>
<evidence type="ECO:0000255" key="2">
    <source>
        <dbReference type="PROSITE-ProRule" id="PRU00238"/>
    </source>
</evidence>
<comment type="subunit">
    <text>Monomer.</text>
</comment>
<comment type="miscellaneous">
    <text>This is one of the minor globin component of Sea lamprey.</text>
</comment>
<comment type="similarity">
    <text evidence="2">Belongs to the globin family.</text>
</comment>
<proteinExistence type="evidence at protein level"/>
<dbReference type="PIR" id="B26042">
    <property type="entry name" value="B26042"/>
</dbReference>
<dbReference type="RefSeq" id="XP_032826185.1">
    <property type="nucleotide sequence ID" value="XM_032970294.1"/>
</dbReference>
<dbReference type="SMR" id="P09968"/>
<dbReference type="STRING" id="7757.ENSPMAP00000005873"/>
<dbReference type="Ensembl" id="ENSPMAT00000005900.1">
    <property type="protein sequence ID" value="ENSPMAP00000005873.1"/>
    <property type="gene ID" value="ENSPMAG00000005328.1"/>
</dbReference>
<dbReference type="GeneID" id="116951566"/>
<dbReference type="GeneTree" id="ENSGT00940000155004"/>
<dbReference type="HOGENOM" id="CLU_003827_10_1_1"/>
<dbReference type="OMA" id="HVQDHER"/>
<dbReference type="OrthoDB" id="436496at2759"/>
<dbReference type="TreeFam" id="TF332967"/>
<dbReference type="Proteomes" id="UP001318040">
    <property type="component" value="Chromosome 43"/>
</dbReference>
<dbReference type="GO" id="GO:0020037">
    <property type="term" value="F:heme binding"/>
    <property type="evidence" value="ECO:0007669"/>
    <property type="project" value="InterPro"/>
</dbReference>
<dbReference type="GO" id="GO:0005506">
    <property type="term" value="F:iron ion binding"/>
    <property type="evidence" value="ECO:0007669"/>
    <property type="project" value="InterPro"/>
</dbReference>
<dbReference type="GO" id="GO:0016491">
    <property type="term" value="F:oxidoreductase activity"/>
    <property type="evidence" value="ECO:0007669"/>
    <property type="project" value="UniProtKB-ARBA"/>
</dbReference>
<dbReference type="GO" id="GO:0019825">
    <property type="term" value="F:oxygen binding"/>
    <property type="evidence" value="ECO:0007669"/>
    <property type="project" value="InterPro"/>
</dbReference>
<dbReference type="GO" id="GO:0005344">
    <property type="term" value="F:oxygen carrier activity"/>
    <property type="evidence" value="ECO:0007669"/>
    <property type="project" value="UniProtKB-KW"/>
</dbReference>
<dbReference type="Gene3D" id="1.10.490.10">
    <property type="entry name" value="Globins"/>
    <property type="match status" value="1"/>
</dbReference>
<dbReference type="InterPro" id="IPR000971">
    <property type="entry name" value="Globin"/>
</dbReference>
<dbReference type="InterPro" id="IPR009050">
    <property type="entry name" value="Globin-like_sf"/>
</dbReference>
<dbReference type="InterPro" id="IPR012292">
    <property type="entry name" value="Globin/Proto"/>
</dbReference>
<dbReference type="InterPro" id="IPR013314">
    <property type="entry name" value="Globin_lamprey/hagfish"/>
</dbReference>
<dbReference type="PANTHER" id="PTHR46783">
    <property type="entry name" value="CYTOGLOBIN"/>
    <property type="match status" value="1"/>
</dbReference>
<dbReference type="PANTHER" id="PTHR46783:SF1">
    <property type="entry name" value="CYTOGLOBIN-1-RELATED"/>
    <property type="match status" value="1"/>
</dbReference>
<dbReference type="Pfam" id="PF00042">
    <property type="entry name" value="Globin"/>
    <property type="match status" value="1"/>
</dbReference>
<dbReference type="PRINTS" id="PR01906">
    <property type="entry name" value="FISHGLOBIN"/>
</dbReference>
<dbReference type="SUPFAM" id="SSF46458">
    <property type="entry name" value="Globin-like"/>
    <property type="match status" value="1"/>
</dbReference>
<dbReference type="PROSITE" id="PS01033">
    <property type="entry name" value="GLOBIN"/>
    <property type="match status" value="1"/>
</dbReference>
<name>GLB3_PETMA</name>
<reference key="1">
    <citation type="journal article" date="1987" name="Biol. Chem. Hoppe-Seyler">
        <title>Primary structure of the minor haemoglobins from the sea lamprey (Petromyzon marinus, Cyclostomata).</title>
        <authorList>
            <person name="Hombrados I."/>
            <person name="Rodewald K."/>
            <person name="Allard M."/>
            <person name="Neuzil E."/>
            <person name="Braunitzer G."/>
        </authorList>
    </citation>
    <scope>PROTEIN SEQUENCE OF 2-150</scope>
</reference>